<organism>
    <name type="scientific">Escherichia coli O17:K52:H18 (strain UMN026 / ExPEC)</name>
    <dbReference type="NCBI Taxonomy" id="585056"/>
    <lineage>
        <taxon>Bacteria</taxon>
        <taxon>Pseudomonadati</taxon>
        <taxon>Pseudomonadota</taxon>
        <taxon>Gammaproteobacteria</taxon>
        <taxon>Enterobacterales</taxon>
        <taxon>Enterobacteriaceae</taxon>
        <taxon>Escherichia</taxon>
    </lineage>
</organism>
<gene>
    <name evidence="1" type="primary">recX</name>
    <name type="ordered locus">ECUMN_3019</name>
</gene>
<dbReference type="EMBL" id="CU928163">
    <property type="protein sequence ID" value="CAR14189.1"/>
    <property type="molecule type" value="Genomic_DNA"/>
</dbReference>
<dbReference type="RefSeq" id="WP_000140506.1">
    <property type="nucleotide sequence ID" value="NC_011751.1"/>
</dbReference>
<dbReference type="RefSeq" id="YP_002413711.1">
    <property type="nucleotide sequence ID" value="NC_011751.1"/>
</dbReference>
<dbReference type="SMR" id="B7N6S8"/>
<dbReference type="STRING" id="585056.ECUMN_3019"/>
<dbReference type="GeneID" id="75172780"/>
<dbReference type="KEGG" id="eum:ECUMN_3019"/>
<dbReference type="PATRIC" id="fig|585056.7.peg.3196"/>
<dbReference type="HOGENOM" id="CLU_066607_3_2_6"/>
<dbReference type="Proteomes" id="UP000007097">
    <property type="component" value="Chromosome"/>
</dbReference>
<dbReference type="GO" id="GO:0005737">
    <property type="term" value="C:cytoplasm"/>
    <property type="evidence" value="ECO:0007669"/>
    <property type="project" value="UniProtKB-SubCell"/>
</dbReference>
<dbReference type="GO" id="GO:0006282">
    <property type="term" value="P:regulation of DNA repair"/>
    <property type="evidence" value="ECO:0007669"/>
    <property type="project" value="UniProtKB-UniRule"/>
</dbReference>
<dbReference type="FunFam" id="1.10.10.10:FF:000133">
    <property type="entry name" value="Regulatory protein RecX"/>
    <property type="match status" value="1"/>
</dbReference>
<dbReference type="FunFam" id="1.10.10.10:FF:000134">
    <property type="entry name" value="Regulatory protein RecX"/>
    <property type="match status" value="1"/>
</dbReference>
<dbReference type="FunFam" id="1.10.10.10:FF:000209">
    <property type="entry name" value="Regulatory protein RecX"/>
    <property type="match status" value="1"/>
</dbReference>
<dbReference type="Gene3D" id="1.10.10.10">
    <property type="entry name" value="Winged helix-like DNA-binding domain superfamily/Winged helix DNA-binding domain"/>
    <property type="match status" value="3"/>
</dbReference>
<dbReference type="HAMAP" id="MF_01114">
    <property type="entry name" value="RecX"/>
    <property type="match status" value="1"/>
</dbReference>
<dbReference type="InterPro" id="IPR053926">
    <property type="entry name" value="RecX_HTH_1st"/>
</dbReference>
<dbReference type="InterPro" id="IPR053924">
    <property type="entry name" value="RecX_HTH_2nd"/>
</dbReference>
<dbReference type="InterPro" id="IPR053925">
    <property type="entry name" value="RecX_HTH_3rd"/>
</dbReference>
<dbReference type="InterPro" id="IPR003783">
    <property type="entry name" value="Regulatory_RecX"/>
</dbReference>
<dbReference type="InterPro" id="IPR036388">
    <property type="entry name" value="WH-like_DNA-bd_sf"/>
</dbReference>
<dbReference type="NCBIfam" id="NF001052">
    <property type="entry name" value="PRK00117.1-1"/>
    <property type="match status" value="1"/>
</dbReference>
<dbReference type="PANTHER" id="PTHR33602">
    <property type="entry name" value="REGULATORY PROTEIN RECX FAMILY PROTEIN"/>
    <property type="match status" value="1"/>
</dbReference>
<dbReference type="PANTHER" id="PTHR33602:SF1">
    <property type="entry name" value="REGULATORY PROTEIN RECX FAMILY PROTEIN"/>
    <property type="match status" value="1"/>
</dbReference>
<dbReference type="Pfam" id="PF21982">
    <property type="entry name" value="RecX_HTH1"/>
    <property type="match status" value="1"/>
</dbReference>
<dbReference type="Pfam" id="PF02631">
    <property type="entry name" value="RecX_HTH2"/>
    <property type="match status" value="1"/>
</dbReference>
<dbReference type="Pfam" id="PF21981">
    <property type="entry name" value="RecX_HTH3"/>
    <property type="match status" value="1"/>
</dbReference>
<reference key="1">
    <citation type="journal article" date="2009" name="PLoS Genet.">
        <title>Organised genome dynamics in the Escherichia coli species results in highly diverse adaptive paths.</title>
        <authorList>
            <person name="Touchon M."/>
            <person name="Hoede C."/>
            <person name="Tenaillon O."/>
            <person name="Barbe V."/>
            <person name="Baeriswyl S."/>
            <person name="Bidet P."/>
            <person name="Bingen E."/>
            <person name="Bonacorsi S."/>
            <person name="Bouchier C."/>
            <person name="Bouvet O."/>
            <person name="Calteau A."/>
            <person name="Chiapello H."/>
            <person name="Clermont O."/>
            <person name="Cruveiller S."/>
            <person name="Danchin A."/>
            <person name="Diard M."/>
            <person name="Dossat C."/>
            <person name="Karoui M.E."/>
            <person name="Frapy E."/>
            <person name="Garry L."/>
            <person name="Ghigo J.M."/>
            <person name="Gilles A.M."/>
            <person name="Johnson J."/>
            <person name="Le Bouguenec C."/>
            <person name="Lescat M."/>
            <person name="Mangenot S."/>
            <person name="Martinez-Jehanne V."/>
            <person name="Matic I."/>
            <person name="Nassif X."/>
            <person name="Oztas S."/>
            <person name="Petit M.A."/>
            <person name="Pichon C."/>
            <person name="Rouy Z."/>
            <person name="Ruf C.S."/>
            <person name="Schneider D."/>
            <person name="Tourret J."/>
            <person name="Vacherie B."/>
            <person name="Vallenet D."/>
            <person name="Medigue C."/>
            <person name="Rocha E.P.C."/>
            <person name="Denamur E."/>
        </authorList>
    </citation>
    <scope>NUCLEOTIDE SEQUENCE [LARGE SCALE GENOMIC DNA]</scope>
    <source>
        <strain>UMN026 / ExPEC</strain>
    </source>
</reference>
<proteinExistence type="inferred from homology"/>
<accession>B7N6S8</accession>
<name>RECX_ECOLU</name>
<protein>
    <recommendedName>
        <fullName evidence="1">Regulatory protein RecX</fullName>
    </recommendedName>
</protein>
<keyword id="KW-0963">Cytoplasm</keyword>
<comment type="function">
    <text evidence="1">Modulates RecA activity.</text>
</comment>
<comment type="subcellular location">
    <subcellularLocation>
        <location evidence="1">Cytoplasm</location>
    </subcellularLocation>
</comment>
<comment type="similarity">
    <text evidence="1">Belongs to the RecX family.</text>
</comment>
<evidence type="ECO:0000255" key="1">
    <source>
        <dbReference type="HAMAP-Rule" id="MF_01114"/>
    </source>
</evidence>
<sequence>MTESTSRRPAYARLLDRAVRILAVRDHSEQELRRKLAAPIMGKNGPEEIDATAEDYERVIAWCHEHGYLDDSRFVARFIASRSRKGYGPARIRQELNQKGISREATEKAMRECDIDWCALARDQATRKYGEPLPTVFSEKVKIQRFLLYRGYLMEDIQDIWRNFAD</sequence>
<feature type="chain" id="PRO_1000137165" description="Regulatory protein RecX">
    <location>
        <begin position="1"/>
        <end position="166"/>
    </location>
</feature>